<protein>
    <recommendedName>
        <fullName>WD repeat-containing protein 90</fullName>
    </recommendedName>
</protein>
<accession>A0JP70</accession>
<evidence type="ECO:0000250" key="1">
    <source>
        <dbReference type="UniProtKB" id="Q96KV7"/>
    </source>
</evidence>
<evidence type="ECO:0000256" key="2">
    <source>
        <dbReference type="SAM" id="MobiDB-lite"/>
    </source>
</evidence>
<evidence type="ECO:0000305" key="3"/>
<keyword id="KW-0970">Cilium biogenesis/degradation</keyword>
<keyword id="KW-0963">Cytoplasm</keyword>
<keyword id="KW-0206">Cytoskeleton</keyword>
<keyword id="KW-0493">Microtubule</keyword>
<keyword id="KW-1185">Reference proteome</keyword>
<keyword id="KW-0677">Repeat</keyword>
<keyword id="KW-0853">WD repeat</keyword>
<reference key="1">
    <citation type="submission" date="2006-11" db="EMBL/GenBank/DDBJ databases">
        <authorList>
            <consortium name="NIH - Xenopus Gene Collection (XGC) project"/>
        </authorList>
    </citation>
    <scope>NUCLEOTIDE SEQUENCE [LARGE SCALE MRNA]</scope>
    <source>
        <tissue>Testis</tissue>
    </source>
</reference>
<comment type="function">
    <text evidence="1">Microtubule-binding protein that plays a crucial role in ensuring inner core protein localization within the centriole core, as well as in maintaining the microtubule wall integrity and the overall centriole roundness and stability. Required for efficient primary cilium formation.</text>
</comment>
<comment type="subcellular location">
    <subcellularLocation>
        <location evidence="1">Cytoplasm</location>
        <location evidence="1">Cytoskeleton</location>
        <location evidence="1">Microtubule organizing center</location>
        <location evidence="1">Centrosome</location>
        <location evidence="1">Centriole</location>
    </subcellularLocation>
    <subcellularLocation>
        <location evidence="1">Cytoplasm</location>
        <location evidence="1">Cytoskeleton</location>
        <location evidence="1">Microtubule organizing center</location>
        <location evidence="1">Centrosome</location>
        <location evidence="1">Centriolar satellite</location>
    </subcellularLocation>
    <text evidence="1">Localizes to the microtubule triplets in the central core region of centrioles and localizes to centriolar satellite in a PCM1-dependent manner.</text>
</comment>
<comment type="similarity">
    <text evidence="3">Belongs to the WD repeat WDR90/POC16 family.</text>
</comment>
<name>WDR90_XENTR</name>
<dbReference type="EMBL" id="BC127273">
    <property type="protein sequence ID" value="AAI27274.1"/>
    <property type="molecule type" value="mRNA"/>
</dbReference>
<dbReference type="RefSeq" id="NP_001090645.1">
    <property type="nucleotide sequence ID" value="NM_001097176.1"/>
</dbReference>
<dbReference type="FunCoup" id="A0JP70">
    <property type="interactions" value="471"/>
</dbReference>
<dbReference type="STRING" id="8364.ENSXETP00000002969"/>
<dbReference type="PaxDb" id="8364-ENSXETP00000007829"/>
<dbReference type="DNASU" id="100036617"/>
<dbReference type="GeneID" id="100036617"/>
<dbReference type="KEGG" id="xtr:100036617"/>
<dbReference type="AGR" id="Xenbase:XB-GENE-5825492"/>
<dbReference type="CTD" id="197335"/>
<dbReference type="Xenbase" id="XB-GENE-5825492">
    <property type="gene designation" value="wdr90"/>
</dbReference>
<dbReference type="eggNOG" id="KOG0266">
    <property type="taxonomic scope" value="Eukaryota"/>
</dbReference>
<dbReference type="eggNOG" id="KOG0267">
    <property type="taxonomic scope" value="Eukaryota"/>
</dbReference>
<dbReference type="eggNOG" id="KOG3213">
    <property type="taxonomic scope" value="Eukaryota"/>
</dbReference>
<dbReference type="InParanoid" id="A0JP70"/>
<dbReference type="OMA" id="DHYVHIR"/>
<dbReference type="OrthoDB" id="6252103at2759"/>
<dbReference type="Proteomes" id="UP000008143">
    <property type="component" value="Chromosome 9"/>
</dbReference>
<dbReference type="Bgee" id="ENSXETG00000003627">
    <property type="expression patterns" value="Expressed in 2-cell stage embryo and 8 other cell types or tissues"/>
</dbReference>
<dbReference type="GO" id="GO:0034451">
    <property type="term" value="C:centriolar satellite"/>
    <property type="evidence" value="ECO:0000250"/>
    <property type="project" value="UniProtKB"/>
</dbReference>
<dbReference type="GO" id="GO:0005814">
    <property type="term" value="C:centriole"/>
    <property type="evidence" value="ECO:0000250"/>
    <property type="project" value="UniProtKB"/>
</dbReference>
<dbReference type="GO" id="GO:0005737">
    <property type="term" value="C:cytoplasm"/>
    <property type="evidence" value="ECO:0007669"/>
    <property type="project" value="UniProtKB-KW"/>
</dbReference>
<dbReference type="GO" id="GO:0005874">
    <property type="term" value="C:microtubule"/>
    <property type="evidence" value="ECO:0007669"/>
    <property type="project" value="UniProtKB-KW"/>
</dbReference>
<dbReference type="GO" id="GO:0008017">
    <property type="term" value="F:microtubule binding"/>
    <property type="evidence" value="ECO:0000250"/>
    <property type="project" value="UniProtKB"/>
</dbReference>
<dbReference type="GO" id="GO:0061511">
    <property type="term" value="P:centriole elongation"/>
    <property type="evidence" value="ECO:0000250"/>
    <property type="project" value="UniProtKB"/>
</dbReference>
<dbReference type="GO" id="GO:0060271">
    <property type="term" value="P:cilium assembly"/>
    <property type="evidence" value="ECO:0000250"/>
    <property type="project" value="UniProtKB"/>
</dbReference>
<dbReference type="FunFam" id="2.130.10.10:FF:000522">
    <property type="entry name" value="WD repeat domain 90"/>
    <property type="match status" value="1"/>
</dbReference>
<dbReference type="FunFam" id="2.130.10.10:FF:000590">
    <property type="entry name" value="WD repeat domain 90"/>
    <property type="match status" value="1"/>
</dbReference>
<dbReference type="FunFam" id="2.130.10.10:FF:001223">
    <property type="entry name" value="WD repeat-containing protein 90"/>
    <property type="match status" value="1"/>
</dbReference>
<dbReference type="FunFam" id="2.130.10.10:FF:001872">
    <property type="entry name" value="WD repeat-containing protein 90"/>
    <property type="match status" value="1"/>
</dbReference>
<dbReference type="Gene3D" id="2.130.10.10">
    <property type="entry name" value="YVTN repeat-like/Quinoprotein amine dehydrogenase"/>
    <property type="match status" value="6"/>
</dbReference>
<dbReference type="InterPro" id="IPR055439">
    <property type="entry name" value="Beta-prop_EML_1st"/>
</dbReference>
<dbReference type="InterPro" id="IPR055441">
    <property type="entry name" value="Beta-prop_WDR90_POC16_2nd"/>
</dbReference>
<dbReference type="InterPro" id="IPR007714">
    <property type="entry name" value="CFA20_dom"/>
</dbReference>
<dbReference type="InterPro" id="IPR011047">
    <property type="entry name" value="Quinoprotein_ADH-like_sf"/>
</dbReference>
<dbReference type="InterPro" id="IPR015943">
    <property type="entry name" value="WD40/YVTN_repeat-like_dom_sf"/>
</dbReference>
<dbReference type="InterPro" id="IPR036322">
    <property type="entry name" value="WD40_repeat_dom_sf"/>
</dbReference>
<dbReference type="InterPro" id="IPR001680">
    <property type="entry name" value="WD40_rpt"/>
</dbReference>
<dbReference type="InterPro" id="IPR050630">
    <property type="entry name" value="WD_repeat_EMAP"/>
</dbReference>
<dbReference type="InterPro" id="IPR055440">
    <property type="entry name" value="WDR90_beta-prop_4th"/>
</dbReference>
<dbReference type="PANTHER" id="PTHR13720:SF24">
    <property type="entry name" value="WD REPEAT-CONTAINING PROTEIN 90"/>
    <property type="match status" value="1"/>
</dbReference>
<dbReference type="PANTHER" id="PTHR13720">
    <property type="entry name" value="WD-40 REPEAT PROTEIN"/>
    <property type="match status" value="1"/>
</dbReference>
<dbReference type="Pfam" id="PF23409">
    <property type="entry name" value="Beta-prop_EML"/>
    <property type="match status" value="1"/>
</dbReference>
<dbReference type="Pfam" id="PF23393">
    <property type="entry name" value="Beta-prop_WDR90_POC16_2nd"/>
    <property type="match status" value="1"/>
</dbReference>
<dbReference type="Pfam" id="PF05018">
    <property type="entry name" value="CFA20_dom"/>
    <property type="match status" value="1"/>
</dbReference>
<dbReference type="Pfam" id="PF00400">
    <property type="entry name" value="WD40"/>
    <property type="match status" value="1"/>
</dbReference>
<dbReference type="Pfam" id="PF23342">
    <property type="entry name" value="WDR90_beta-prop_4th"/>
    <property type="match status" value="1"/>
</dbReference>
<dbReference type="SMART" id="SM00320">
    <property type="entry name" value="WD40"/>
    <property type="match status" value="21"/>
</dbReference>
<dbReference type="SUPFAM" id="SSF50998">
    <property type="entry name" value="Quinoprotein alcohol dehydrogenase-like"/>
    <property type="match status" value="1"/>
</dbReference>
<dbReference type="SUPFAM" id="SSF50978">
    <property type="entry name" value="WD40 repeat-like"/>
    <property type="match status" value="4"/>
</dbReference>
<dbReference type="PROSITE" id="PS00678">
    <property type="entry name" value="WD_REPEATS_1"/>
    <property type="match status" value="1"/>
</dbReference>
<dbReference type="PROSITE" id="PS50082">
    <property type="entry name" value="WD_REPEATS_2"/>
    <property type="match status" value="3"/>
</dbReference>
<dbReference type="PROSITE" id="PS50294">
    <property type="entry name" value="WD_REPEATS_REGION"/>
    <property type="match status" value="4"/>
</dbReference>
<feature type="chain" id="PRO_0000341414" description="WD repeat-containing protein 90">
    <location>
        <begin position="1"/>
        <end position="1848"/>
    </location>
</feature>
<feature type="repeat" description="WD 1">
    <location>
        <begin position="436"/>
        <end position="479"/>
    </location>
</feature>
<feature type="repeat" description="WD 2">
    <location>
        <begin position="481"/>
        <end position="523"/>
    </location>
</feature>
<feature type="repeat" description="WD 3">
    <location>
        <begin position="530"/>
        <end position="570"/>
    </location>
</feature>
<feature type="repeat" description="WD 4">
    <location>
        <begin position="644"/>
        <end position="683"/>
    </location>
</feature>
<feature type="repeat" description="WD 5">
    <location>
        <begin position="685"/>
        <end position="724"/>
    </location>
</feature>
<feature type="repeat" description="WD 6">
    <location>
        <begin position="727"/>
        <end position="766"/>
    </location>
</feature>
<feature type="repeat" description="WD 7">
    <location>
        <begin position="769"/>
        <end position="808"/>
    </location>
</feature>
<feature type="repeat" description="WD 8">
    <location>
        <begin position="811"/>
        <end position="850"/>
    </location>
</feature>
<feature type="repeat" description="WD 9">
    <location>
        <begin position="955"/>
        <end position="993"/>
    </location>
</feature>
<feature type="repeat" description="WD 10">
    <location>
        <begin position="998"/>
        <end position="1035"/>
    </location>
</feature>
<feature type="repeat" description="WD 11">
    <location>
        <begin position="1252"/>
        <end position="1297"/>
    </location>
</feature>
<feature type="repeat" description="WD 12">
    <location>
        <begin position="1300"/>
        <end position="1341"/>
    </location>
</feature>
<feature type="repeat" description="WD 13">
    <location>
        <begin position="1343"/>
        <end position="1382"/>
    </location>
</feature>
<feature type="repeat" description="WD 14">
    <location>
        <begin position="1395"/>
        <end position="1433"/>
    </location>
</feature>
<feature type="repeat" description="WD 15">
    <location>
        <begin position="1435"/>
        <end position="1473"/>
    </location>
</feature>
<feature type="repeat" description="WD 16">
    <location>
        <begin position="1532"/>
        <end position="1571"/>
    </location>
</feature>
<feature type="repeat" description="WD 17">
    <location>
        <begin position="1574"/>
        <end position="1621"/>
    </location>
</feature>
<feature type="repeat" description="WD 18">
    <location>
        <begin position="1624"/>
        <end position="1663"/>
    </location>
</feature>
<feature type="repeat" description="WD 19">
    <location>
        <begin position="1670"/>
        <end position="1714"/>
    </location>
</feature>
<feature type="repeat" description="WD 20">
    <location>
        <begin position="1774"/>
        <end position="1813"/>
    </location>
</feature>
<feature type="repeat" description="WD 21">
    <location>
        <begin position="1815"/>
        <end position="1848"/>
    </location>
</feature>
<feature type="region of interest" description="Binds with microtubules" evidence="1">
    <location>
        <begin position="1"/>
        <end position="222"/>
    </location>
</feature>
<feature type="region of interest" description="Disordered" evidence="2">
    <location>
        <begin position="257"/>
        <end position="278"/>
    </location>
</feature>
<feature type="region of interest" description="Disordered" evidence="2">
    <location>
        <begin position="316"/>
        <end position="336"/>
    </location>
</feature>
<feature type="region of interest" description="Disordered" evidence="2">
    <location>
        <begin position="1053"/>
        <end position="1133"/>
    </location>
</feature>
<feature type="region of interest" description="Disordered" evidence="2">
    <location>
        <begin position="1151"/>
        <end position="1178"/>
    </location>
</feature>
<feature type="compositionally biased region" description="Basic and acidic residues" evidence="2">
    <location>
        <begin position="320"/>
        <end position="335"/>
    </location>
</feature>
<feature type="compositionally biased region" description="Acidic residues" evidence="2">
    <location>
        <begin position="1102"/>
        <end position="1113"/>
    </location>
</feature>
<feature type="compositionally biased region" description="Basic and acidic residues" evidence="2">
    <location>
        <begin position="1114"/>
        <end position="1129"/>
    </location>
</feature>
<feature type="compositionally biased region" description="Basic and acidic residues" evidence="2">
    <location>
        <begin position="1164"/>
        <end position="1178"/>
    </location>
</feature>
<sequence length="1848" mass="203426">MAGVWQHPFVNVFKHLRLEEWKKSSKEGDVTSVMDKTLKCTVYRIRGSIPAGNYIQLPKTSSQSLGLTGRYLYILFKPLPGKHFVVHIDVSAEDGQTVRISFSNLFKEFKSTATWLQFPFVCGAIKGSVYDSTAQGARQGMVGPAPSGSRWTCLLLDVQYILSLYLSRRYSHLRSAKLCSNLLVRNLMTSDLLFNPEVNFMEARHAKTLPDGISPMPREMSFPVPKGEKWHDLYDFIMFPSDSSKLPYDSIQKGQSMVTAPGAPMSRSPARERPRSVTISKPVQDRVSLIQQITTPRPMPHRSLLRVESVPERPVSVSARAEEARDLEDRSRGVEQDGGVHVYAHKTNKLSIHRHKSDSEQVICTKVDRPETLSVPPECKKLLPDPIFNLRRIIGFGGCTECFALWTHTGCSVVYPCHAIIVVLEVKTGEQRFLLGHTDKVSALAFNGSCTLLASAQTGSLSMVRLWHFQKGSCLAMFKTHVHSVSYLSFSHSGTVLCGVGKDGHGKTMVVVWNTSQASRSGEVAVLAKAHTDIDIQTMKIAFFDDTRMVSCGKDNVRLWRVRGGTLRSCPVNLGEYHMLEFSDLAFEAGHRPEKEAEDRTLYVSSRSGHILEIDYKNVVLRNVRRVQPGQQQHSERRDKQTFSSGPGIAINSLSVSATFCATGTEDGYLRLWPLDFSGVFLEAEHEGPVSCVAISPEGLRVLSCTSSGELGVLDVPSRGYNTLMRSHTDTLLSFSCHPTHPQLVTVSSDNTIRIWDTGTLQQLYDFTAEEETPCAVTFHPVRQAFACGFSSGTIRFFDITATALQAEHKQHRGAITGLLFSPDGSLMYSCCSLGSVALYSIGHKEQHVLRVLGNVVCKDSERGPMALSLSSDGRLLAFVGPTEYTVTVMDARSLDELLRVDVSILDLDSTTLDCALGLAFSPLKPHHLLVSTSGNKILWLDPKTGRLTREVTQVHKQCCSSLAVSMDTRYMLTAGDRLLKVWDQRQPGTVRPQVFIGHSEAVQQVDFSPDQQSVISAGDAVFIWDFLAAPDPEFTKTDCVPALPFALHSSAALDPSSEHRRDSTFISSGMPRGTAPRPCISSPPRLDISPVQGMDHPDLFSESDDGQEEEGNRDEQERTLVPDTRDNLVESDEQSSVVIIECQPNRAKLLTGSKSNSSSLREGMVKSTHEPPRPDSYTHFHTRFKASCLAKGMCHPPEGQEMLTLRALIGYNGNGRANMAWNPDTGFFSYTCGCVIVVEDLHSGSQRHWLGHPEEISTLALTNDALVLASASGSGDGSSLCQIRIWDTQDGSCMKILTHHRTEVQAMSYSRDDRLFVSIGDYRDGNLALWSTKGYELLATSRLFQPVHAVTFNPAHFDDFASAGPGAVSFWRIETQGTDTQIKVYRVAVPEEVGTAAELTSITYNSTSLLYSGCSTGQVCVWDCQTHRCFLTWEADQGEIGILLCRGNRLLTGSNTRRIRLWCVAAVQELREKGSGASSTSVLMEHEMTLDGAIVSATFDDALEMGIVGTTAGTLWYINWVENTSIRLISGHRNKVMDLAVAHGESHCATCGEDGSLRIWSLQSCELLLQFQVLNQSCLCLAWSPQPKSGPSTEDQRIAAGYSDGTIRIFSVSKTEMEMKIHPHPCAVTSIAYSTSGDVLLTGGKDGQMAITSPRTGMTIRVLSDHKGSPITTIECTGRKLTGLPTDGELWLAASTDRRVSIWASDWSKDKCELLDWLSFPAPTSQKDLDVSVPTLAAFCPWQPGTVVYSGFGVEKEILFYSLIQKQVLLRIPLSHFATSLTLSPAASLIAVGSNERLLRLIDTSAGTKQDFAAYDDGVHLCRVSPSGNLLLTASYNQVLVWDIQNS</sequence>
<gene>
    <name type="primary">wdr90</name>
</gene>
<proteinExistence type="evidence at transcript level"/>
<organism>
    <name type="scientific">Xenopus tropicalis</name>
    <name type="common">Western clawed frog</name>
    <name type="synonym">Silurana tropicalis</name>
    <dbReference type="NCBI Taxonomy" id="8364"/>
    <lineage>
        <taxon>Eukaryota</taxon>
        <taxon>Metazoa</taxon>
        <taxon>Chordata</taxon>
        <taxon>Craniata</taxon>
        <taxon>Vertebrata</taxon>
        <taxon>Euteleostomi</taxon>
        <taxon>Amphibia</taxon>
        <taxon>Batrachia</taxon>
        <taxon>Anura</taxon>
        <taxon>Pipoidea</taxon>
        <taxon>Pipidae</taxon>
        <taxon>Xenopodinae</taxon>
        <taxon>Xenopus</taxon>
        <taxon>Silurana</taxon>
    </lineage>
</organism>